<proteinExistence type="inferred from homology"/>
<sequence length="278" mass="29821">MTFEPSATLRDPFVLYGESFGSRLLLGTARYPSPATLEAAVQASAPAMITVALRRQGAVGDGEGGQAFWQMLKALNVPVLPNTAGCFTAQEVITTAMMAREVFETPWIKLELIGDDYTLQPDTLNLPAVAETLLKEGFKVLPYCTEDLVLCRRLLDVGCQALMPWAAPIGTGRGAVNPHAMRVLRERLPDTPLIVDAGLGLPSHAAQVLEWGYDGVLLNTAVAQAAYPVDMARAFAQAVAAGRTAYLAGPMPEREVAQASTPVVGMPFWHADNTEQRA</sequence>
<dbReference type="EC" id="2.8.1.10" evidence="1"/>
<dbReference type="EMBL" id="CU633749">
    <property type="protein sequence ID" value="CAP62855.1"/>
    <property type="molecule type" value="Genomic_DNA"/>
</dbReference>
<dbReference type="RefSeq" id="WP_012351523.1">
    <property type="nucleotide sequence ID" value="NC_010528.1"/>
</dbReference>
<dbReference type="SMR" id="B2AGF6"/>
<dbReference type="GeneID" id="29763320"/>
<dbReference type="KEGG" id="cti:RALTA_A0182"/>
<dbReference type="eggNOG" id="COG2022">
    <property type="taxonomic scope" value="Bacteria"/>
</dbReference>
<dbReference type="HOGENOM" id="CLU_062233_1_0_4"/>
<dbReference type="BioCyc" id="CTAI977880:RALTA_RS00900-MONOMER"/>
<dbReference type="UniPathway" id="UPA00060"/>
<dbReference type="Proteomes" id="UP000001692">
    <property type="component" value="Chromosome 1"/>
</dbReference>
<dbReference type="GO" id="GO:0005737">
    <property type="term" value="C:cytoplasm"/>
    <property type="evidence" value="ECO:0007669"/>
    <property type="project" value="UniProtKB-SubCell"/>
</dbReference>
<dbReference type="GO" id="GO:1990107">
    <property type="term" value="F:thiazole synthase activity"/>
    <property type="evidence" value="ECO:0007669"/>
    <property type="project" value="UniProtKB-EC"/>
</dbReference>
<dbReference type="GO" id="GO:0009229">
    <property type="term" value="P:thiamine diphosphate biosynthetic process"/>
    <property type="evidence" value="ECO:0007669"/>
    <property type="project" value="UniProtKB-UniRule"/>
</dbReference>
<dbReference type="CDD" id="cd04728">
    <property type="entry name" value="ThiG"/>
    <property type="match status" value="1"/>
</dbReference>
<dbReference type="Gene3D" id="3.20.20.70">
    <property type="entry name" value="Aldolase class I"/>
    <property type="match status" value="1"/>
</dbReference>
<dbReference type="HAMAP" id="MF_00443">
    <property type="entry name" value="ThiG"/>
    <property type="match status" value="1"/>
</dbReference>
<dbReference type="InterPro" id="IPR013785">
    <property type="entry name" value="Aldolase_TIM"/>
</dbReference>
<dbReference type="InterPro" id="IPR033983">
    <property type="entry name" value="Thiazole_synthase_ThiG"/>
</dbReference>
<dbReference type="InterPro" id="IPR008867">
    <property type="entry name" value="ThiG"/>
</dbReference>
<dbReference type="PANTHER" id="PTHR34266">
    <property type="entry name" value="THIAZOLE SYNTHASE"/>
    <property type="match status" value="1"/>
</dbReference>
<dbReference type="PANTHER" id="PTHR34266:SF2">
    <property type="entry name" value="THIAZOLE SYNTHASE"/>
    <property type="match status" value="1"/>
</dbReference>
<dbReference type="Pfam" id="PF05690">
    <property type="entry name" value="ThiG"/>
    <property type="match status" value="1"/>
</dbReference>
<dbReference type="SUPFAM" id="SSF110399">
    <property type="entry name" value="ThiG-like"/>
    <property type="match status" value="1"/>
</dbReference>
<comment type="function">
    <text evidence="1">Catalyzes the rearrangement of 1-deoxy-D-xylulose 5-phosphate (DXP) to produce the thiazole phosphate moiety of thiamine. Sulfur is provided by the thiocarboxylate moiety of the carrier protein ThiS. In vitro, sulfur can be provided by H(2)S.</text>
</comment>
<comment type="catalytic activity">
    <reaction evidence="1">
        <text>[ThiS sulfur-carrier protein]-C-terminal-Gly-aminoethanethioate + 2-iminoacetate + 1-deoxy-D-xylulose 5-phosphate = [ThiS sulfur-carrier protein]-C-terminal Gly-Gly + 2-[(2R,5Z)-2-carboxy-4-methylthiazol-5(2H)-ylidene]ethyl phosphate + 2 H2O + H(+)</text>
        <dbReference type="Rhea" id="RHEA:26297"/>
        <dbReference type="Rhea" id="RHEA-COMP:12909"/>
        <dbReference type="Rhea" id="RHEA-COMP:19908"/>
        <dbReference type="ChEBI" id="CHEBI:15377"/>
        <dbReference type="ChEBI" id="CHEBI:15378"/>
        <dbReference type="ChEBI" id="CHEBI:57792"/>
        <dbReference type="ChEBI" id="CHEBI:62899"/>
        <dbReference type="ChEBI" id="CHEBI:77846"/>
        <dbReference type="ChEBI" id="CHEBI:90778"/>
        <dbReference type="ChEBI" id="CHEBI:232372"/>
        <dbReference type="EC" id="2.8.1.10"/>
    </reaction>
</comment>
<comment type="pathway">
    <text evidence="1">Cofactor biosynthesis; thiamine diphosphate biosynthesis.</text>
</comment>
<comment type="subunit">
    <text evidence="1">Homotetramer. Forms heterodimers with either ThiH or ThiS.</text>
</comment>
<comment type="subcellular location">
    <subcellularLocation>
        <location evidence="1">Cytoplasm</location>
    </subcellularLocation>
</comment>
<comment type="similarity">
    <text evidence="1">Belongs to the ThiG family.</text>
</comment>
<feature type="chain" id="PRO_1000196852" description="Thiazole synthase">
    <location>
        <begin position="1"/>
        <end position="278"/>
    </location>
</feature>
<feature type="active site" description="Schiff-base intermediate with DXP" evidence="1">
    <location>
        <position position="109"/>
    </location>
</feature>
<feature type="binding site" evidence="1">
    <location>
        <position position="170"/>
    </location>
    <ligand>
        <name>1-deoxy-D-xylulose 5-phosphate</name>
        <dbReference type="ChEBI" id="CHEBI:57792"/>
    </ligand>
</feature>
<feature type="binding site" evidence="1">
    <location>
        <begin position="197"/>
        <end position="198"/>
    </location>
    <ligand>
        <name>1-deoxy-D-xylulose 5-phosphate</name>
        <dbReference type="ChEBI" id="CHEBI:57792"/>
    </ligand>
</feature>
<feature type="binding site" evidence="1">
    <location>
        <begin position="219"/>
        <end position="220"/>
    </location>
    <ligand>
        <name>1-deoxy-D-xylulose 5-phosphate</name>
        <dbReference type="ChEBI" id="CHEBI:57792"/>
    </ligand>
</feature>
<keyword id="KW-0963">Cytoplasm</keyword>
<keyword id="KW-0704">Schiff base</keyword>
<keyword id="KW-0784">Thiamine biosynthesis</keyword>
<keyword id="KW-0808">Transferase</keyword>
<reference key="1">
    <citation type="journal article" date="2008" name="Genome Res.">
        <title>Genome sequence of the beta-rhizobium Cupriavidus taiwanensis and comparative genomics of rhizobia.</title>
        <authorList>
            <person name="Amadou C."/>
            <person name="Pascal G."/>
            <person name="Mangenot S."/>
            <person name="Glew M."/>
            <person name="Bontemps C."/>
            <person name="Capela D."/>
            <person name="Carrere S."/>
            <person name="Cruveiller S."/>
            <person name="Dossat C."/>
            <person name="Lajus A."/>
            <person name="Marchetti M."/>
            <person name="Poinsot V."/>
            <person name="Rouy Z."/>
            <person name="Servin B."/>
            <person name="Saad M."/>
            <person name="Schenowitz C."/>
            <person name="Barbe V."/>
            <person name="Batut J."/>
            <person name="Medigue C."/>
            <person name="Masson-Boivin C."/>
        </authorList>
    </citation>
    <scope>NUCLEOTIDE SEQUENCE [LARGE SCALE GENOMIC DNA]</scope>
    <source>
        <strain>DSM 17343 / BCRC 17206 / CCUG 44338 / CIP 107171 / LMG 19424 / R1</strain>
    </source>
</reference>
<gene>
    <name evidence="1" type="primary">thiG</name>
    <name type="ordered locus">RALTA_A0182</name>
</gene>
<name>THIG_CUPTR</name>
<organism>
    <name type="scientific">Cupriavidus taiwanensis (strain DSM 17343 / BCRC 17206 / CCUG 44338 / CIP 107171 / LMG 19424 / R1)</name>
    <name type="common">Ralstonia taiwanensis (strain LMG 19424)</name>
    <dbReference type="NCBI Taxonomy" id="977880"/>
    <lineage>
        <taxon>Bacteria</taxon>
        <taxon>Pseudomonadati</taxon>
        <taxon>Pseudomonadota</taxon>
        <taxon>Betaproteobacteria</taxon>
        <taxon>Burkholderiales</taxon>
        <taxon>Burkholderiaceae</taxon>
        <taxon>Cupriavidus</taxon>
    </lineage>
</organism>
<protein>
    <recommendedName>
        <fullName evidence="1">Thiazole synthase</fullName>
        <ecNumber evidence="1">2.8.1.10</ecNumber>
    </recommendedName>
</protein>
<accession>B2AGF6</accession>
<evidence type="ECO:0000255" key="1">
    <source>
        <dbReference type="HAMAP-Rule" id="MF_00443"/>
    </source>
</evidence>